<gene>
    <name evidence="4" type="primary">OSCA1.3</name>
    <name type="ordered locus">At1g11960</name>
    <name type="ORF">F12F1.17</name>
</gene>
<feature type="chain" id="PRO_0000429805" description="Hyperosmolality-gated Ca2+ permeable channel 1.3">
    <location>
        <begin position="1"/>
        <end position="771"/>
    </location>
</feature>
<feature type="transmembrane region" description="Helical" evidence="1">
    <location>
        <begin position="7"/>
        <end position="27"/>
    </location>
</feature>
<feature type="transmembrane region" description="Helical" evidence="1">
    <location>
        <begin position="101"/>
        <end position="121"/>
    </location>
</feature>
<feature type="transmembrane region" description="Helical" evidence="1">
    <location>
        <begin position="158"/>
        <end position="178"/>
    </location>
</feature>
<feature type="transmembrane region" description="Helical" evidence="1">
    <location>
        <begin position="375"/>
        <end position="395"/>
    </location>
</feature>
<feature type="transmembrane region" description="Helical" evidence="1">
    <location>
        <begin position="427"/>
        <end position="447"/>
    </location>
</feature>
<feature type="transmembrane region" description="Helical" evidence="1">
    <location>
        <begin position="467"/>
        <end position="487"/>
    </location>
</feature>
<feature type="transmembrane region" description="Helical" evidence="1">
    <location>
        <begin position="512"/>
        <end position="532"/>
    </location>
</feature>
<feature type="transmembrane region" description="Helical" evidence="1">
    <location>
        <begin position="584"/>
        <end position="604"/>
    </location>
</feature>
<feature type="transmembrane region" description="Helical" evidence="1">
    <location>
        <begin position="630"/>
        <end position="650"/>
    </location>
</feature>
<feature type="transmembrane region" description="Helical" evidence="1">
    <location>
        <begin position="651"/>
        <end position="671"/>
    </location>
</feature>
<feature type="region of interest" description="Disordered" evidence="2">
    <location>
        <begin position="744"/>
        <end position="771"/>
    </location>
</feature>
<feature type="compositionally biased region" description="Polar residues" evidence="2">
    <location>
        <begin position="751"/>
        <end position="771"/>
    </location>
</feature>
<feature type="modified residue" description="Phosphoserine" evidence="3">
    <location>
        <position position="54"/>
    </location>
</feature>
<feature type="mutagenesis site" description="Decreased phosphorylation by BIK1." evidence="3">
    <original>S</original>
    <variation>A</variation>
    <location>
        <position position="54"/>
    </location>
</feature>
<accession>B5TYT3</accession>
<accession>O65383</accession>
<proteinExistence type="evidence at protein level"/>
<keyword id="KW-0106">Calcium</keyword>
<keyword id="KW-1003">Cell membrane</keyword>
<keyword id="KW-0391">Immunity</keyword>
<keyword id="KW-0399">Innate immunity</keyword>
<keyword id="KW-0407">Ion channel</keyword>
<keyword id="KW-0406">Ion transport</keyword>
<keyword id="KW-0472">Membrane</keyword>
<keyword id="KW-0597">Phosphoprotein</keyword>
<keyword id="KW-0611">Plant defense</keyword>
<keyword id="KW-1185">Reference proteome</keyword>
<keyword id="KW-0812">Transmembrane</keyword>
<keyword id="KW-1133">Transmembrane helix</keyword>
<keyword id="KW-0813">Transport</keyword>
<reference key="1">
    <citation type="submission" date="2008-08" db="EMBL/GenBank/DDBJ databases">
        <title>Arabidopsis stress-inducible genes encoding membrane proteins.</title>
        <authorList>
            <person name="Tanaka K."/>
            <person name="Stacey G."/>
        </authorList>
    </citation>
    <scope>NUCLEOTIDE SEQUENCE [MRNA]</scope>
    <source>
        <strain>cv. Columbia</strain>
        <tissue>Seedling</tissue>
    </source>
</reference>
<reference key="2">
    <citation type="journal article" date="2000" name="Nature">
        <title>Sequence and analysis of chromosome 1 of the plant Arabidopsis thaliana.</title>
        <authorList>
            <person name="Theologis A."/>
            <person name="Ecker J.R."/>
            <person name="Palm C.J."/>
            <person name="Federspiel N.A."/>
            <person name="Kaul S."/>
            <person name="White O."/>
            <person name="Alonso J."/>
            <person name="Altafi H."/>
            <person name="Araujo R."/>
            <person name="Bowman C.L."/>
            <person name="Brooks S.Y."/>
            <person name="Buehler E."/>
            <person name="Chan A."/>
            <person name="Chao Q."/>
            <person name="Chen H."/>
            <person name="Cheuk R.F."/>
            <person name="Chin C.W."/>
            <person name="Chung M.K."/>
            <person name="Conn L."/>
            <person name="Conway A.B."/>
            <person name="Conway A.R."/>
            <person name="Creasy T.H."/>
            <person name="Dewar K."/>
            <person name="Dunn P."/>
            <person name="Etgu P."/>
            <person name="Feldblyum T.V."/>
            <person name="Feng J.-D."/>
            <person name="Fong B."/>
            <person name="Fujii C.Y."/>
            <person name="Gill J.E."/>
            <person name="Goldsmith A.D."/>
            <person name="Haas B."/>
            <person name="Hansen N.F."/>
            <person name="Hughes B."/>
            <person name="Huizar L."/>
            <person name="Hunter J.L."/>
            <person name="Jenkins J."/>
            <person name="Johnson-Hopson C."/>
            <person name="Khan S."/>
            <person name="Khaykin E."/>
            <person name="Kim C.J."/>
            <person name="Koo H.L."/>
            <person name="Kremenetskaia I."/>
            <person name="Kurtz D.B."/>
            <person name="Kwan A."/>
            <person name="Lam B."/>
            <person name="Langin-Hooper S."/>
            <person name="Lee A."/>
            <person name="Lee J.M."/>
            <person name="Lenz C.A."/>
            <person name="Li J.H."/>
            <person name="Li Y.-P."/>
            <person name="Lin X."/>
            <person name="Liu S.X."/>
            <person name="Liu Z.A."/>
            <person name="Luros J.S."/>
            <person name="Maiti R."/>
            <person name="Marziali A."/>
            <person name="Militscher J."/>
            <person name="Miranda M."/>
            <person name="Nguyen M."/>
            <person name="Nierman W.C."/>
            <person name="Osborne B.I."/>
            <person name="Pai G."/>
            <person name="Peterson J."/>
            <person name="Pham P.K."/>
            <person name="Rizzo M."/>
            <person name="Rooney T."/>
            <person name="Rowley D."/>
            <person name="Sakano H."/>
            <person name="Salzberg S.L."/>
            <person name="Schwartz J.R."/>
            <person name="Shinn P."/>
            <person name="Southwick A.M."/>
            <person name="Sun H."/>
            <person name="Tallon L.J."/>
            <person name="Tambunga G."/>
            <person name="Toriumi M.J."/>
            <person name="Town C.D."/>
            <person name="Utterback T."/>
            <person name="Van Aken S."/>
            <person name="Vaysberg M."/>
            <person name="Vysotskaia V.S."/>
            <person name="Walker M."/>
            <person name="Wu D."/>
            <person name="Yu G."/>
            <person name="Fraser C.M."/>
            <person name="Venter J.C."/>
            <person name="Davis R.W."/>
        </authorList>
    </citation>
    <scope>NUCLEOTIDE SEQUENCE [LARGE SCALE GENOMIC DNA]</scope>
    <source>
        <strain>cv. Columbia</strain>
    </source>
</reference>
<reference key="3">
    <citation type="journal article" date="2017" name="Plant J.">
        <title>Araport11: a complete reannotation of the Arabidopsis thaliana reference genome.</title>
        <authorList>
            <person name="Cheng C.Y."/>
            <person name="Krishnakumar V."/>
            <person name="Chan A.P."/>
            <person name="Thibaud-Nissen F."/>
            <person name="Schobel S."/>
            <person name="Town C.D."/>
        </authorList>
    </citation>
    <scope>GENOME REANNOTATION</scope>
    <source>
        <strain>cv. Columbia</strain>
    </source>
</reference>
<reference key="4">
    <citation type="journal article" date="2014" name="Cell Res.">
        <title>DUF221 proteins are a family of osmosensitive calcium-permeable cation channels conserved across eukaryotes.</title>
        <authorList>
            <person name="Hou C."/>
            <person name="Tian W."/>
            <person name="Kleist T."/>
            <person name="He K."/>
            <person name="Garcia V."/>
            <person name="Bai F."/>
            <person name="Hao Y."/>
            <person name="Luan S."/>
            <person name="Li L."/>
        </authorList>
    </citation>
    <scope>GENE FAMILY</scope>
</reference>
<reference key="5">
    <citation type="journal article" date="2020" name="Nature">
        <title>The calcium-permeable channel OSCA1.3 regulates plant stomatal immunity.</title>
        <authorList>
            <person name="Thor K."/>
            <person name="Jiang S."/>
            <person name="Michard E."/>
            <person name="George J."/>
            <person name="Scherzer S."/>
            <person name="Huang S."/>
            <person name="Dindas J."/>
            <person name="Derbyshire P."/>
            <person name="Leitao N."/>
            <person name="DeFalco T.A."/>
            <person name="Koester P."/>
            <person name="Hunter K."/>
            <person name="Kimura S."/>
            <person name="Gronnier J."/>
            <person name="Stransfeld L."/>
            <person name="Kadota Y."/>
            <person name="Buecherl C.A."/>
            <person name="Charpentier M."/>
            <person name="Wrzaczek M."/>
            <person name="MacLean D."/>
            <person name="Oldroyd G.E.D."/>
            <person name="Menke F.L.H."/>
            <person name="Roelfsema M.R.G."/>
            <person name="Hedrich R."/>
            <person name="Feijo J."/>
            <person name="Zipfel C."/>
        </authorList>
    </citation>
    <scope>FUNCTION</scope>
    <scope>ACTIVITY REGULATION</scope>
    <scope>SUBCELLULAR LOCATION</scope>
    <scope>TISSUE SPECIFICITY</scope>
    <scope>PHOSPHORYLATION AT SER-54</scope>
    <scope>MUTAGENESIS OF SER-54</scope>
</reference>
<dbReference type="EMBL" id="FJ041116">
    <property type="protein sequence ID" value="ACI01072.1"/>
    <property type="molecule type" value="mRNA"/>
</dbReference>
<dbReference type="EMBL" id="AC002131">
    <property type="protein sequence ID" value="AAC17615.1"/>
    <property type="status" value="ALT_SEQ"/>
    <property type="molecule type" value="Genomic_DNA"/>
</dbReference>
<dbReference type="EMBL" id="CP002684">
    <property type="protein sequence ID" value="AEE28821.1"/>
    <property type="molecule type" value="Genomic_DNA"/>
</dbReference>
<dbReference type="EMBL" id="CP002684">
    <property type="protein sequence ID" value="ANM58257.1"/>
    <property type="molecule type" value="Genomic_DNA"/>
</dbReference>
<dbReference type="PIR" id="E86254">
    <property type="entry name" value="E86254"/>
</dbReference>
<dbReference type="RefSeq" id="NP_001320706.1">
    <property type="nucleotide sequence ID" value="NM_001332015.1"/>
</dbReference>
<dbReference type="RefSeq" id="NP_172660.5">
    <property type="nucleotide sequence ID" value="NM_101068.6"/>
</dbReference>
<dbReference type="SMR" id="B5TYT3"/>
<dbReference type="FunCoup" id="B5TYT3">
    <property type="interactions" value="674"/>
</dbReference>
<dbReference type="STRING" id="3702.B5TYT3"/>
<dbReference type="GlyGen" id="B5TYT3">
    <property type="glycosylation" value="1 site"/>
</dbReference>
<dbReference type="iPTMnet" id="B5TYT3"/>
<dbReference type="PaxDb" id="3702-AT1G11960.1"/>
<dbReference type="ProteomicsDB" id="222770"/>
<dbReference type="EnsemblPlants" id="AT1G11960.1">
    <property type="protein sequence ID" value="AT1G11960.1"/>
    <property type="gene ID" value="AT1G11960"/>
</dbReference>
<dbReference type="EnsemblPlants" id="AT1G11960.3">
    <property type="protein sequence ID" value="AT1G11960.3"/>
    <property type="gene ID" value="AT1G11960"/>
</dbReference>
<dbReference type="GeneID" id="837748"/>
<dbReference type="Gramene" id="AT1G11960.1">
    <property type="protein sequence ID" value="AT1G11960.1"/>
    <property type="gene ID" value="AT1G11960"/>
</dbReference>
<dbReference type="Gramene" id="AT1G11960.3">
    <property type="protein sequence ID" value="AT1G11960.3"/>
    <property type="gene ID" value="AT1G11960"/>
</dbReference>
<dbReference type="KEGG" id="ath:AT1G11960"/>
<dbReference type="Araport" id="AT1G11960"/>
<dbReference type="TAIR" id="AT1G11960"/>
<dbReference type="eggNOG" id="KOG1134">
    <property type="taxonomic scope" value="Eukaryota"/>
</dbReference>
<dbReference type="HOGENOM" id="CLU_002458_7_1_1"/>
<dbReference type="InParanoid" id="B5TYT3"/>
<dbReference type="OMA" id="MIKTGFL"/>
<dbReference type="PhylomeDB" id="B5TYT3"/>
<dbReference type="PRO" id="PR:B5TYT3"/>
<dbReference type="Proteomes" id="UP000006548">
    <property type="component" value="Chromosome 1"/>
</dbReference>
<dbReference type="ExpressionAtlas" id="B5TYT3">
    <property type="expression patterns" value="baseline and differential"/>
</dbReference>
<dbReference type="GO" id="GO:0005886">
    <property type="term" value="C:plasma membrane"/>
    <property type="evidence" value="ECO:0000314"/>
    <property type="project" value="TAIR"/>
</dbReference>
<dbReference type="GO" id="GO:0005262">
    <property type="term" value="F:calcium channel activity"/>
    <property type="evidence" value="ECO:0000316"/>
    <property type="project" value="TAIR"/>
</dbReference>
<dbReference type="GO" id="GO:0005227">
    <property type="term" value="F:calcium-activated cation channel activity"/>
    <property type="evidence" value="ECO:0007669"/>
    <property type="project" value="InterPro"/>
</dbReference>
<dbReference type="GO" id="GO:0140426">
    <property type="term" value="P:pathogen-associated molecular pattern receptor signaling pathway"/>
    <property type="evidence" value="ECO:0000316"/>
    <property type="project" value="TAIR"/>
</dbReference>
<dbReference type="GO" id="GO:0010118">
    <property type="term" value="P:stomatal movement"/>
    <property type="evidence" value="ECO:0000315"/>
    <property type="project" value="TAIR"/>
</dbReference>
<dbReference type="InterPro" id="IPR045122">
    <property type="entry name" value="Csc1-like"/>
</dbReference>
<dbReference type="InterPro" id="IPR003864">
    <property type="entry name" value="CSC1/OSCA1-like_7TM"/>
</dbReference>
<dbReference type="InterPro" id="IPR027815">
    <property type="entry name" value="CSC1/OSCA1-like_cyt"/>
</dbReference>
<dbReference type="InterPro" id="IPR032880">
    <property type="entry name" value="Csc1/OSCA1-like_N"/>
</dbReference>
<dbReference type="PANTHER" id="PTHR13018:SF105">
    <property type="entry name" value="BNAC05G09770D PROTEIN"/>
    <property type="match status" value="1"/>
</dbReference>
<dbReference type="PANTHER" id="PTHR13018">
    <property type="entry name" value="PROBABLE MEMBRANE PROTEIN DUF221-RELATED"/>
    <property type="match status" value="1"/>
</dbReference>
<dbReference type="Pfam" id="PF14703">
    <property type="entry name" value="PHM7_cyt"/>
    <property type="match status" value="1"/>
</dbReference>
<dbReference type="Pfam" id="PF02714">
    <property type="entry name" value="RSN1_7TM"/>
    <property type="match status" value="1"/>
</dbReference>
<dbReference type="Pfam" id="PF13967">
    <property type="entry name" value="RSN1_TM"/>
    <property type="match status" value="1"/>
</dbReference>
<sequence length="771" mass="88280">MATLGDIGVAAAINILTAIIFLLAFAILRIQPFNDRVYFPKWYLKGIRSSPLHSGALVSKFVNVNLGSYLRFLNWMPAALKMPEPELIDHAGLDSAVYLRIYLIGLKIFVPIALLAWSILVPVNWTSHGLQLAKLRNVTSSDIDKLSISNIENGSDRFWTHLVMAYAFTFWTCYVLMKEYEKVAAMRLAFLQNEQRRPDQFTVLVRNVPADPDESISDSVEHFFLVNHPDHYLTHQVVYNANDLAALVEQKKSTQNWLDYYQLKYTRNQEHKPRIKTGFLGLWGKKVDAIDHYIAEIEKLNEQIMEERKKVKKDDTSVMPAAFVSFKTRWGAAVSAQTQQSSDPTEWLTEWAPEAREVFWSNLAIPYVSLTVRRLIMHIAFFFLTFFFMIPIAFVQSLASIEGIEKNAPFLKSIIENDLFKSVIQGFLPGIVLKLFLIFLPSILMVMSKFEGFVSLSSLERRAAFRYYIFNLINVFLGSVITGSAFEQLDSFLKQSAKEIPKTVGVAIPIKATFFITYIMVDGWAGIAGEILRLKPLIFFHIKNSLLVKTEKDREEAMNPGQINYHATEPRIQLYFLLGLVYAPVTPVLLPFIIIFFALAYLVFRHQIINVYNQEYESAARFWPDVHGRIISALIIAQILLMGLLSTKGAAQSTPFLLFLPIITFFFHRYCKGRYEPAFLRHPLKEAMVKDTLERAREPNFNLKPYLQKAYIHPVFKDNDYEDSRFDEISGYCIEDSDEECVTVPTKRQSRINTPAVSHASRGSSRSPPSK</sequence>
<organism>
    <name type="scientific">Arabidopsis thaliana</name>
    <name type="common">Mouse-ear cress</name>
    <dbReference type="NCBI Taxonomy" id="3702"/>
    <lineage>
        <taxon>Eukaryota</taxon>
        <taxon>Viridiplantae</taxon>
        <taxon>Streptophyta</taxon>
        <taxon>Embryophyta</taxon>
        <taxon>Tracheophyta</taxon>
        <taxon>Spermatophyta</taxon>
        <taxon>Magnoliopsida</taxon>
        <taxon>eudicotyledons</taxon>
        <taxon>Gunneridae</taxon>
        <taxon>Pentapetalae</taxon>
        <taxon>rosids</taxon>
        <taxon>malvids</taxon>
        <taxon>Brassicales</taxon>
        <taxon>Brassicaceae</taxon>
        <taxon>Camelineae</taxon>
        <taxon>Arabidopsis</taxon>
    </lineage>
</organism>
<name>OSC13_ARATH</name>
<comment type="function">
    <text evidence="3">Calcium-permeable channel that plays a key role in plant stomatal immunity (PubMed:32846426). In response to pathogen-associated molecular pattern (PAMP) perception, phosphorylated and activated by BIK1, triggering rapid influx of calcium ions across the plasma membrane, leading to stomatal closure (PubMed:32846426).</text>
</comment>
<comment type="catalytic activity">
    <reaction evidence="3">
        <text>Ca(2+)(in) = Ca(2+)(out)</text>
        <dbReference type="Rhea" id="RHEA:29671"/>
        <dbReference type="ChEBI" id="CHEBI:29108"/>
    </reaction>
</comment>
<comment type="activity regulation">
    <text evidence="3">Activated following phosphorylation at Ser-54 by BIK1.</text>
</comment>
<comment type="subcellular location">
    <subcellularLocation>
        <location evidence="3">Cell membrane</location>
        <topology evidence="1">Multi-pass membrane protein</topology>
    </subcellularLocation>
</comment>
<comment type="tissue specificity">
    <text evidence="3">Preferentially expressed in guard cells.</text>
</comment>
<comment type="PTM">
    <text evidence="3">Phosphorylated at Ser-54 by BIK1 in response to pathogen-associated molecular pattern (PAMP) perception, promoting its activation.</text>
</comment>
<comment type="similarity">
    <text evidence="5">Belongs to the CSC1 (TC 1.A.17) family.</text>
</comment>
<comment type="sequence caution" evidence="5">
    <conflict type="erroneous gene model prediction">
        <sequence resource="EMBL-CDS" id="AAC17615"/>
    </conflict>
</comment>
<evidence type="ECO:0000255" key="1"/>
<evidence type="ECO:0000256" key="2">
    <source>
        <dbReference type="SAM" id="MobiDB-lite"/>
    </source>
</evidence>
<evidence type="ECO:0000269" key="3">
    <source>
    </source>
</evidence>
<evidence type="ECO:0000303" key="4">
    <source>
    </source>
</evidence>
<evidence type="ECO:0000305" key="5"/>
<protein>
    <recommendedName>
        <fullName evidence="4">Hyperosmolality-gated Ca2+ permeable channel 1.3</fullName>
        <shortName evidence="4">AtOSCA1.3</shortName>
    </recommendedName>
</protein>